<comment type="similarity">
    <text evidence="1">Belongs to the UPF0102 family.</text>
</comment>
<sequence length="142" mass="15858">MQVIDLPLDRAGEALVAAWCRDRRLEVLAERWHCRWGELDLVTQEDSALRFIEVKTRRQTGWDQSGLLAIGPAKQRCLSRAAACYLASLGNQAAVACRFDVALVRYRSEPSAAAVKVAAWGQGYLELWCYLPDAFSAVESGW</sequence>
<reference key="1">
    <citation type="submission" date="2005-08" db="EMBL/GenBank/DDBJ databases">
        <title>Complete sequence of chromosome 1 of Synechococcus elongatus PCC 7942.</title>
        <authorList>
            <consortium name="US DOE Joint Genome Institute"/>
            <person name="Copeland A."/>
            <person name="Lucas S."/>
            <person name="Lapidus A."/>
            <person name="Barry K."/>
            <person name="Detter J.C."/>
            <person name="Glavina T."/>
            <person name="Hammon N."/>
            <person name="Israni S."/>
            <person name="Pitluck S."/>
            <person name="Schmutz J."/>
            <person name="Larimer F."/>
            <person name="Land M."/>
            <person name="Kyrpides N."/>
            <person name="Lykidis A."/>
            <person name="Golden S."/>
            <person name="Richardson P."/>
        </authorList>
    </citation>
    <scope>NUCLEOTIDE SEQUENCE [LARGE SCALE GENOMIC DNA]</scope>
    <source>
        <strain>ATCC 33912 / PCC 7942 / FACHB-805</strain>
    </source>
</reference>
<feature type="chain" id="PRO_0000336275" description="UPF0102 protein Synpcc7942_0312">
    <location>
        <begin position="1"/>
        <end position="142"/>
    </location>
</feature>
<keyword id="KW-1185">Reference proteome</keyword>
<dbReference type="EMBL" id="CP000100">
    <property type="protein sequence ID" value="ABB56344.1"/>
    <property type="molecule type" value="Genomic_DNA"/>
</dbReference>
<dbReference type="RefSeq" id="WP_011377531.1">
    <property type="nucleotide sequence ID" value="NZ_JACJTX010000002.1"/>
</dbReference>
<dbReference type="SMR" id="Q31RH5"/>
<dbReference type="STRING" id="1140.Synpcc7942_0312"/>
<dbReference type="PaxDb" id="1140-Synpcc7942_0312"/>
<dbReference type="KEGG" id="syf:Synpcc7942_0312"/>
<dbReference type="eggNOG" id="COG0792">
    <property type="taxonomic scope" value="Bacteria"/>
</dbReference>
<dbReference type="HOGENOM" id="CLU_115353_3_0_3"/>
<dbReference type="OrthoDB" id="9802516at2"/>
<dbReference type="BioCyc" id="SYNEL:SYNPCC7942_0312-MONOMER"/>
<dbReference type="Proteomes" id="UP000889800">
    <property type="component" value="Chromosome"/>
</dbReference>
<dbReference type="GO" id="GO:0003676">
    <property type="term" value="F:nucleic acid binding"/>
    <property type="evidence" value="ECO:0007669"/>
    <property type="project" value="InterPro"/>
</dbReference>
<dbReference type="Gene3D" id="3.40.1350.10">
    <property type="match status" value="1"/>
</dbReference>
<dbReference type="HAMAP" id="MF_00048">
    <property type="entry name" value="UPF0102"/>
    <property type="match status" value="1"/>
</dbReference>
<dbReference type="InterPro" id="IPR011335">
    <property type="entry name" value="Restrct_endonuc-II-like"/>
</dbReference>
<dbReference type="InterPro" id="IPR011856">
    <property type="entry name" value="tRNA_endonuc-like_dom_sf"/>
</dbReference>
<dbReference type="InterPro" id="IPR003509">
    <property type="entry name" value="UPF0102_YraN-like"/>
</dbReference>
<dbReference type="NCBIfam" id="TIGR00252">
    <property type="entry name" value="YraN family protein"/>
    <property type="match status" value="1"/>
</dbReference>
<dbReference type="PANTHER" id="PTHR34039">
    <property type="entry name" value="UPF0102 PROTEIN YRAN"/>
    <property type="match status" value="1"/>
</dbReference>
<dbReference type="PANTHER" id="PTHR34039:SF1">
    <property type="entry name" value="UPF0102 PROTEIN YRAN"/>
    <property type="match status" value="1"/>
</dbReference>
<dbReference type="Pfam" id="PF02021">
    <property type="entry name" value="UPF0102"/>
    <property type="match status" value="1"/>
</dbReference>
<dbReference type="SUPFAM" id="SSF52980">
    <property type="entry name" value="Restriction endonuclease-like"/>
    <property type="match status" value="1"/>
</dbReference>
<organism>
    <name type="scientific">Synechococcus elongatus (strain ATCC 33912 / PCC 7942 / FACHB-805)</name>
    <name type="common">Anacystis nidulans R2</name>
    <dbReference type="NCBI Taxonomy" id="1140"/>
    <lineage>
        <taxon>Bacteria</taxon>
        <taxon>Bacillati</taxon>
        <taxon>Cyanobacteriota</taxon>
        <taxon>Cyanophyceae</taxon>
        <taxon>Synechococcales</taxon>
        <taxon>Synechococcaceae</taxon>
        <taxon>Synechococcus</taxon>
    </lineage>
</organism>
<proteinExistence type="inferred from homology"/>
<accession>Q31RH5</accession>
<name>Y312_SYNE7</name>
<protein>
    <recommendedName>
        <fullName evidence="1">UPF0102 protein Synpcc7942_0312</fullName>
    </recommendedName>
</protein>
<gene>
    <name type="ordered locus">Synpcc7942_0312</name>
</gene>
<evidence type="ECO:0000255" key="1">
    <source>
        <dbReference type="HAMAP-Rule" id="MF_00048"/>
    </source>
</evidence>